<comment type="function">
    <text evidence="1">One of two assembly initiator proteins, it binds directly to the 5'-end of the 23S rRNA, where it nucleates assembly of the 50S subunit.</text>
</comment>
<comment type="function">
    <text evidence="1">One of the proteins that surrounds the polypeptide exit tunnel on the outside of the subunit.</text>
</comment>
<comment type="subunit">
    <text evidence="1">Part of the 50S ribosomal subunit.</text>
</comment>
<comment type="similarity">
    <text evidence="1">Belongs to the universal ribosomal protein uL24 family.</text>
</comment>
<evidence type="ECO:0000255" key="1">
    <source>
        <dbReference type="HAMAP-Rule" id="MF_01326"/>
    </source>
</evidence>
<evidence type="ECO:0000256" key="2">
    <source>
        <dbReference type="SAM" id="MobiDB-lite"/>
    </source>
</evidence>
<evidence type="ECO:0000305" key="3"/>
<protein>
    <recommendedName>
        <fullName evidence="1">Large ribosomal subunit protein uL24</fullName>
    </recommendedName>
    <alternativeName>
        <fullName evidence="3">50S ribosomal protein L24</fullName>
    </alternativeName>
</protein>
<keyword id="KW-1185">Reference proteome</keyword>
<keyword id="KW-0687">Ribonucleoprotein</keyword>
<keyword id="KW-0689">Ribosomal protein</keyword>
<keyword id="KW-0694">RNA-binding</keyword>
<keyword id="KW-0699">rRNA-binding</keyword>
<name>RL24_KORVE</name>
<gene>
    <name evidence="1" type="primary">rplX</name>
    <name type="ordered locus">Acid345_1237</name>
</gene>
<dbReference type="EMBL" id="CP000360">
    <property type="protein sequence ID" value="ABF40239.1"/>
    <property type="molecule type" value="Genomic_DNA"/>
</dbReference>
<dbReference type="RefSeq" id="WP_011522041.1">
    <property type="nucleotide sequence ID" value="NC_008009.1"/>
</dbReference>
<dbReference type="SMR" id="Q1ISB1"/>
<dbReference type="STRING" id="204669.Acid345_1237"/>
<dbReference type="EnsemblBacteria" id="ABF40239">
    <property type="protein sequence ID" value="ABF40239"/>
    <property type="gene ID" value="Acid345_1237"/>
</dbReference>
<dbReference type="KEGG" id="aba:Acid345_1237"/>
<dbReference type="eggNOG" id="COG0198">
    <property type="taxonomic scope" value="Bacteria"/>
</dbReference>
<dbReference type="HOGENOM" id="CLU_093315_2_2_0"/>
<dbReference type="OrthoDB" id="9807419at2"/>
<dbReference type="Proteomes" id="UP000002432">
    <property type="component" value="Chromosome"/>
</dbReference>
<dbReference type="GO" id="GO:1990904">
    <property type="term" value="C:ribonucleoprotein complex"/>
    <property type="evidence" value="ECO:0007669"/>
    <property type="project" value="UniProtKB-KW"/>
</dbReference>
<dbReference type="GO" id="GO:0005840">
    <property type="term" value="C:ribosome"/>
    <property type="evidence" value="ECO:0007669"/>
    <property type="project" value="UniProtKB-KW"/>
</dbReference>
<dbReference type="GO" id="GO:0019843">
    <property type="term" value="F:rRNA binding"/>
    <property type="evidence" value="ECO:0007669"/>
    <property type="project" value="UniProtKB-UniRule"/>
</dbReference>
<dbReference type="GO" id="GO:0003735">
    <property type="term" value="F:structural constituent of ribosome"/>
    <property type="evidence" value="ECO:0007669"/>
    <property type="project" value="InterPro"/>
</dbReference>
<dbReference type="GO" id="GO:0006412">
    <property type="term" value="P:translation"/>
    <property type="evidence" value="ECO:0007669"/>
    <property type="project" value="UniProtKB-UniRule"/>
</dbReference>
<dbReference type="CDD" id="cd06089">
    <property type="entry name" value="KOW_RPL26"/>
    <property type="match status" value="1"/>
</dbReference>
<dbReference type="Gene3D" id="2.30.30.30">
    <property type="match status" value="1"/>
</dbReference>
<dbReference type="HAMAP" id="MF_01326_B">
    <property type="entry name" value="Ribosomal_uL24_B"/>
    <property type="match status" value="1"/>
</dbReference>
<dbReference type="InterPro" id="IPR005824">
    <property type="entry name" value="KOW"/>
</dbReference>
<dbReference type="InterPro" id="IPR014722">
    <property type="entry name" value="Rib_uL2_dom2"/>
</dbReference>
<dbReference type="InterPro" id="IPR003256">
    <property type="entry name" value="Ribosomal_uL24"/>
</dbReference>
<dbReference type="InterPro" id="IPR041988">
    <property type="entry name" value="Ribosomal_uL24_KOW"/>
</dbReference>
<dbReference type="InterPro" id="IPR008991">
    <property type="entry name" value="Translation_prot_SH3-like_sf"/>
</dbReference>
<dbReference type="NCBIfam" id="TIGR01079">
    <property type="entry name" value="rplX_bact"/>
    <property type="match status" value="1"/>
</dbReference>
<dbReference type="PANTHER" id="PTHR12903">
    <property type="entry name" value="MITOCHONDRIAL RIBOSOMAL PROTEIN L24"/>
    <property type="match status" value="1"/>
</dbReference>
<dbReference type="Pfam" id="PF00467">
    <property type="entry name" value="KOW"/>
    <property type="match status" value="1"/>
</dbReference>
<dbReference type="Pfam" id="PF17136">
    <property type="entry name" value="ribosomal_L24"/>
    <property type="match status" value="1"/>
</dbReference>
<dbReference type="SMART" id="SM00739">
    <property type="entry name" value="KOW"/>
    <property type="match status" value="1"/>
</dbReference>
<dbReference type="SUPFAM" id="SSF50104">
    <property type="entry name" value="Translation proteins SH3-like domain"/>
    <property type="match status" value="1"/>
</dbReference>
<sequence>MANVTTDIKRNDTVAVTSGKDKGKQGRVLRVIPDKGRILVEHVGMVKNHVKPNPQKNIKGGIAEQESAIAISNVALVCAKCGPTRVAHKGEGKQKSRVCAKCGSDLTGK</sequence>
<accession>Q1ISB1</accession>
<organism>
    <name type="scientific">Koribacter versatilis (strain Ellin345)</name>
    <dbReference type="NCBI Taxonomy" id="204669"/>
    <lineage>
        <taxon>Bacteria</taxon>
        <taxon>Pseudomonadati</taxon>
        <taxon>Acidobacteriota</taxon>
        <taxon>Terriglobia</taxon>
        <taxon>Terriglobales</taxon>
        <taxon>Candidatus Korobacteraceae</taxon>
        <taxon>Candidatus Korobacter</taxon>
    </lineage>
</organism>
<reference key="1">
    <citation type="journal article" date="2009" name="Appl. Environ. Microbiol.">
        <title>Three genomes from the phylum Acidobacteria provide insight into the lifestyles of these microorganisms in soils.</title>
        <authorList>
            <person name="Ward N.L."/>
            <person name="Challacombe J.F."/>
            <person name="Janssen P.H."/>
            <person name="Henrissat B."/>
            <person name="Coutinho P.M."/>
            <person name="Wu M."/>
            <person name="Xie G."/>
            <person name="Haft D.H."/>
            <person name="Sait M."/>
            <person name="Badger J."/>
            <person name="Barabote R.D."/>
            <person name="Bradley B."/>
            <person name="Brettin T.S."/>
            <person name="Brinkac L.M."/>
            <person name="Bruce D."/>
            <person name="Creasy T."/>
            <person name="Daugherty S.C."/>
            <person name="Davidsen T.M."/>
            <person name="DeBoy R.T."/>
            <person name="Detter J.C."/>
            <person name="Dodson R.J."/>
            <person name="Durkin A.S."/>
            <person name="Ganapathy A."/>
            <person name="Gwinn-Giglio M."/>
            <person name="Han C.S."/>
            <person name="Khouri H."/>
            <person name="Kiss H."/>
            <person name="Kothari S.P."/>
            <person name="Madupu R."/>
            <person name="Nelson K.E."/>
            <person name="Nelson W.C."/>
            <person name="Paulsen I."/>
            <person name="Penn K."/>
            <person name="Ren Q."/>
            <person name="Rosovitz M.J."/>
            <person name="Selengut J.D."/>
            <person name="Shrivastava S."/>
            <person name="Sullivan S.A."/>
            <person name="Tapia R."/>
            <person name="Thompson L.S."/>
            <person name="Watkins K.L."/>
            <person name="Yang Q."/>
            <person name="Yu C."/>
            <person name="Zafar N."/>
            <person name="Zhou L."/>
            <person name="Kuske C.R."/>
        </authorList>
    </citation>
    <scope>NUCLEOTIDE SEQUENCE [LARGE SCALE GENOMIC DNA]</scope>
    <source>
        <strain>Ellin345</strain>
    </source>
</reference>
<feature type="chain" id="PRO_0000355641" description="Large ribosomal subunit protein uL24">
    <location>
        <begin position="1"/>
        <end position="109"/>
    </location>
</feature>
<feature type="region of interest" description="Disordered" evidence="2">
    <location>
        <begin position="1"/>
        <end position="24"/>
    </location>
</feature>
<proteinExistence type="inferred from homology"/>